<proteinExistence type="inferred from homology"/>
<comment type="function">
    <text evidence="2">One of the essential components for the initiation of protein synthesis. Protects formylmethionyl-tRNA from spontaneous hydrolysis and promotes its binding to the 30S ribosomal subunits. Also involved in the hydrolysis of GTP during the formation of the 70S ribosomal complex.</text>
</comment>
<comment type="subcellular location">
    <subcellularLocation>
        <location evidence="2">Cytoplasm</location>
    </subcellularLocation>
</comment>
<comment type="similarity">
    <text evidence="2">Belongs to the TRAFAC class translation factor GTPase superfamily. Classic translation factor GTPase family. IF-2 subfamily.</text>
</comment>
<accession>Q83JF9</accession>
<sequence>MTDVTIKTLAAERQTSVERLVQQFADAGIRKSADDSVSAQEKQTLIDHLNQKNSGPDKLTLQRKTRSTLNIPGTGGKSKSVQIEVRKKRTFVKRDPQEAERLAAEEQARREAEESAKREAQQKAEREAAEQAKREAAEQAKREAAEKDKVSNQQDDMTKNAQAEKARREQEAAELKRKAEEEARRKLEEEARRVAEEARRMAEENKWTDNAEPTEDSSDYHVTTSQHARQAEDESDREVEGGRGRGRNAKAARPKKGNKHAESKADREEARAAVRGGKGGKRKGSSLQQGFQKPAQAVNRDVVIGETITVGELANKMAVKGSQVIKAMMKLGAMATINQVIDQETAQLVAEEMGHKVILRRENELEEAVMSDRDTGAAAEPRAPVVTIMGHVDHGKTSLLDYIRSTKVASGEAGGITQHIGAYHVETENGMITFLDTPGHAAFTSMRARGAQATDIVVLVVAADDGVMPQTIEAIQHAKAAQVPVVVAVNKIDKPEADPDRVKNELSQYGILPEEWGGESQFVHVSAKAGTGIDELLDAILLQAEVLELKAVRKGMASGAVIESFLDKGRGPVATVLVREGTLHKGDIVLCGFEYGRVRAMRNELGQEVLEAGPSIPVEILGLSGVPAAGDEVTVVRDEKKAREVALYRQGKFREVKLARQQKSKLENMFANMTEGEVHEVNIVLKADVQGSVEAISDSLLKLSTDEVKVKIIGSGVGGITETDATLAAASNAILVGFNVRADASARKVIEAESLDLRYYSVIYNLIDEVKAAMSGMLSPELKQQIIGLAEVRDVFKSPKFGAIAGCMVTEGVVKRHNPIRVLRDNVVIYEGELESLRRFKDDVNEVRNGMECGIGVKNYNDVRTGDVIEVFEIIEIQRTIA</sequence>
<name>IF2_SHIFL</name>
<protein>
    <recommendedName>
        <fullName evidence="2">Translation initiation factor IF-2</fullName>
    </recommendedName>
</protein>
<feature type="chain" id="PRO_0000137247" description="Translation initiation factor IF-2">
    <location>
        <begin position="1"/>
        <end position="882"/>
    </location>
</feature>
<feature type="domain" description="tr-type G">
    <location>
        <begin position="381"/>
        <end position="550"/>
    </location>
</feature>
<feature type="region of interest" description="Disordered" evidence="3">
    <location>
        <begin position="28"/>
        <end position="296"/>
    </location>
</feature>
<feature type="region of interest" description="G1" evidence="1">
    <location>
        <begin position="390"/>
        <end position="397"/>
    </location>
</feature>
<feature type="region of interest" description="G2" evidence="1">
    <location>
        <begin position="415"/>
        <end position="419"/>
    </location>
</feature>
<feature type="region of interest" description="G3" evidence="1">
    <location>
        <begin position="436"/>
        <end position="439"/>
    </location>
</feature>
<feature type="region of interest" description="G4" evidence="1">
    <location>
        <begin position="490"/>
        <end position="493"/>
    </location>
</feature>
<feature type="region of interest" description="G5" evidence="1">
    <location>
        <begin position="526"/>
        <end position="528"/>
    </location>
</feature>
<feature type="compositionally biased region" description="Polar residues" evidence="3">
    <location>
        <begin position="67"/>
        <end position="81"/>
    </location>
</feature>
<feature type="compositionally biased region" description="Basic and acidic residues" evidence="3">
    <location>
        <begin position="92"/>
        <end position="209"/>
    </location>
</feature>
<feature type="compositionally biased region" description="Basic residues" evidence="3">
    <location>
        <begin position="244"/>
        <end position="258"/>
    </location>
</feature>
<feature type="compositionally biased region" description="Basic and acidic residues" evidence="3">
    <location>
        <begin position="259"/>
        <end position="272"/>
    </location>
</feature>
<feature type="binding site" evidence="2">
    <location>
        <begin position="390"/>
        <end position="397"/>
    </location>
    <ligand>
        <name>GTP</name>
        <dbReference type="ChEBI" id="CHEBI:37565"/>
    </ligand>
</feature>
<feature type="binding site" evidence="2">
    <location>
        <begin position="436"/>
        <end position="440"/>
    </location>
    <ligand>
        <name>GTP</name>
        <dbReference type="ChEBI" id="CHEBI:37565"/>
    </ligand>
</feature>
<feature type="binding site" evidence="2">
    <location>
        <begin position="490"/>
        <end position="493"/>
    </location>
    <ligand>
        <name>GTP</name>
        <dbReference type="ChEBI" id="CHEBI:37565"/>
    </ligand>
</feature>
<feature type="modified residue" description="N6-acetyllysine" evidence="1">
    <location>
        <position position="800"/>
    </location>
</feature>
<organism>
    <name type="scientific">Shigella flexneri</name>
    <dbReference type="NCBI Taxonomy" id="623"/>
    <lineage>
        <taxon>Bacteria</taxon>
        <taxon>Pseudomonadati</taxon>
        <taxon>Pseudomonadota</taxon>
        <taxon>Gammaproteobacteria</taxon>
        <taxon>Enterobacterales</taxon>
        <taxon>Enterobacteriaceae</taxon>
        <taxon>Shigella</taxon>
    </lineage>
</organism>
<dbReference type="EMBL" id="AE005674">
    <property type="protein sequence ID" value="AAN44676.1"/>
    <property type="molecule type" value="Genomic_DNA"/>
</dbReference>
<dbReference type="EMBL" id="AE014073">
    <property type="protein sequence ID" value="AAP18490.1"/>
    <property type="molecule type" value="Genomic_DNA"/>
</dbReference>
<dbReference type="RefSeq" id="NP_708969.1">
    <property type="nucleotide sequence ID" value="NC_004337.2"/>
</dbReference>
<dbReference type="RefSeq" id="WP_000133055.1">
    <property type="nucleotide sequence ID" value="NZ_WPGW01000004.1"/>
</dbReference>
<dbReference type="SMR" id="Q83JF9"/>
<dbReference type="STRING" id="198214.SF3209"/>
<dbReference type="PaxDb" id="198214-SF3209"/>
<dbReference type="GeneID" id="1027145"/>
<dbReference type="KEGG" id="sfl:SF3209"/>
<dbReference type="KEGG" id="sfx:S3426"/>
<dbReference type="PATRIC" id="fig|198214.7.peg.3809"/>
<dbReference type="HOGENOM" id="CLU_006301_6_3_6"/>
<dbReference type="Proteomes" id="UP000001006">
    <property type="component" value="Chromosome"/>
</dbReference>
<dbReference type="Proteomes" id="UP000002673">
    <property type="component" value="Chromosome"/>
</dbReference>
<dbReference type="GO" id="GO:0005829">
    <property type="term" value="C:cytosol"/>
    <property type="evidence" value="ECO:0007669"/>
    <property type="project" value="TreeGrafter"/>
</dbReference>
<dbReference type="GO" id="GO:0005525">
    <property type="term" value="F:GTP binding"/>
    <property type="evidence" value="ECO:0007669"/>
    <property type="project" value="UniProtKB-KW"/>
</dbReference>
<dbReference type="GO" id="GO:0003924">
    <property type="term" value="F:GTPase activity"/>
    <property type="evidence" value="ECO:0007669"/>
    <property type="project" value="UniProtKB-UniRule"/>
</dbReference>
<dbReference type="GO" id="GO:0097216">
    <property type="term" value="F:guanosine tetraphosphate binding"/>
    <property type="evidence" value="ECO:0007669"/>
    <property type="project" value="UniProtKB-ARBA"/>
</dbReference>
<dbReference type="GO" id="GO:0003743">
    <property type="term" value="F:translation initiation factor activity"/>
    <property type="evidence" value="ECO:0007669"/>
    <property type="project" value="UniProtKB-UniRule"/>
</dbReference>
<dbReference type="CDD" id="cd01887">
    <property type="entry name" value="IF2_eIF5B"/>
    <property type="match status" value="1"/>
</dbReference>
<dbReference type="CDD" id="cd03702">
    <property type="entry name" value="IF2_mtIF2_II"/>
    <property type="match status" value="1"/>
</dbReference>
<dbReference type="CDD" id="cd03692">
    <property type="entry name" value="mtIF2_IVc"/>
    <property type="match status" value="1"/>
</dbReference>
<dbReference type="FunFam" id="2.40.30.10:FF:000007">
    <property type="entry name" value="Translation initiation factor IF-2"/>
    <property type="match status" value="1"/>
</dbReference>
<dbReference type="FunFam" id="2.40.30.10:FF:000008">
    <property type="entry name" value="Translation initiation factor IF-2"/>
    <property type="match status" value="1"/>
</dbReference>
<dbReference type="FunFam" id="3.30.56.50:FF:000001">
    <property type="entry name" value="Translation initiation factor IF-2"/>
    <property type="match status" value="1"/>
</dbReference>
<dbReference type="FunFam" id="3.40.50.10050:FF:000001">
    <property type="entry name" value="Translation initiation factor IF-2"/>
    <property type="match status" value="1"/>
</dbReference>
<dbReference type="FunFam" id="3.40.50.300:FF:000019">
    <property type="entry name" value="Translation initiation factor IF-2"/>
    <property type="match status" value="1"/>
</dbReference>
<dbReference type="Gene3D" id="3.40.50.300">
    <property type="entry name" value="P-loop containing nucleotide triphosphate hydrolases"/>
    <property type="match status" value="1"/>
</dbReference>
<dbReference type="Gene3D" id="3.30.56.50">
    <property type="entry name" value="Putative DNA-binding domain, N-terminal subdomain of bacterial translation initiation factor IF2"/>
    <property type="match status" value="1"/>
</dbReference>
<dbReference type="Gene3D" id="2.40.30.10">
    <property type="entry name" value="Translation factors"/>
    <property type="match status" value="2"/>
</dbReference>
<dbReference type="Gene3D" id="3.40.50.10050">
    <property type="entry name" value="Translation initiation factor IF- 2, domain 3"/>
    <property type="match status" value="1"/>
</dbReference>
<dbReference type="HAMAP" id="MF_00100_B">
    <property type="entry name" value="IF_2_B"/>
    <property type="match status" value="1"/>
</dbReference>
<dbReference type="InterPro" id="IPR009061">
    <property type="entry name" value="DNA-bd_dom_put_sf"/>
</dbReference>
<dbReference type="InterPro" id="IPR053905">
    <property type="entry name" value="EF-G-like_DII"/>
</dbReference>
<dbReference type="InterPro" id="IPR004161">
    <property type="entry name" value="EFTu-like_2"/>
</dbReference>
<dbReference type="InterPro" id="IPR013575">
    <property type="entry name" value="IF2_assoc_dom_bac"/>
</dbReference>
<dbReference type="InterPro" id="IPR044145">
    <property type="entry name" value="IF2_II"/>
</dbReference>
<dbReference type="InterPro" id="IPR006847">
    <property type="entry name" value="IF2_N"/>
</dbReference>
<dbReference type="InterPro" id="IPR027417">
    <property type="entry name" value="P-loop_NTPase"/>
</dbReference>
<dbReference type="InterPro" id="IPR005225">
    <property type="entry name" value="Small_GTP-bd"/>
</dbReference>
<dbReference type="InterPro" id="IPR000795">
    <property type="entry name" value="T_Tr_GTP-bd_dom"/>
</dbReference>
<dbReference type="InterPro" id="IPR000178">
    <property type="entry name" value="TF_IF2_bacterial-like"/>
</dbReference>
<dbReference type="InterPro" id="IPR015760">
    <property type="entry name" value="TIF_IF2"/>
</dbReference>
<dbReference type="InterPro" id="IPR023115">
    <property type="entry name" value="TIF_IF2_dom3"/>
</dbReference>
<dbReference type="InterPro" id="IPR036925">
    <property type="entry name" value="TIF_IF2_dom3_sf"/>
</dbReference>
<dbReference type="InterPro" id="IPR009000">
    <property type="entry name" value="Transl_B-barrel_sf"/>
</dbReference>
<dbReference type="NCBIfam" id="TIGR00487">
    <property type="entry name" value="IF-2"/>
    <property type="match status" value="1"/>
</dbReference>
<dbReference type="NCBIfam" id="TIGR00231">
    <property type="entry name" value="small_GTP"/>
    <property type="match status" value="1"/>
</dbReference>
<dbReference type="PANTHER" id="PTHR43381:SF5">
    <property type="entry name" value="TR-TYPE G DOMAIN-CONTAINING PROTEIN"/>
    <property type="match status" value="1"/>
</dbReference>
<dbReference type="PANTHER" id="PTHR43381">
    <property type="entry name" value="TRANSLATION INITIATION FACTOR IF-2-RELATED"/>
    <property type="match status" value="1"/>
</dbReference>
<dbReference type="Pfam" id="PF22042">
    <property type="entry name" value="EF-G_D2"/>
    <property type="match status" value="1"/>
</dbReference>
<dbReference type="Pfam" id="PF00009">
    <property type="entry name" value="GTP_EFTU"/>
    <property type="match status" value="1"/>
</dbReference>
<dbReference type="Pfam" id="PF03144">
    <property type="entry name" value="GTP_EFTU_D2"/>
    <property type="match status" value="1"/>
</dbReference>
<dbReference type="Pfam" id="PF11987">
    <property type="entry name" value="IF-2"/>
    <property type="match status" value="1"/>
</dbReference>
<dbReference type="Pfam" id="PF08364">
    <property type="entry name" value="IF2_assoc"/>
    <property type="match status" value="1"/>
</dbReference>
<dbReference type="Pfam" id="PF04760">
    <property type="entry name" value="IF2_N"/>
    <property type="match status" value="2"/>
</dbReference>
<dbReference type="SUPFAM" id="SSF52156">
    <property type="entry name" value="Initiation factor IF2/eIF5b, domain 3"/>
    <property type="match status" value="1"/>
</dbReference>
<dbReference type="SUPFAM" id="SSF52540">
    <property type="entry name" value="P-loop containing nucleoside triphosphate hydrolases"/>
    <property type="match status" value="1"/>
</dbReference>
<dbReference type="SUPFAM" id="SSF46955">
    <property type="entry name" value="Putative DNA-binding domain"/>
    <property type="match status" value="1"/>
</dbReference>
<dbReference type="SUPFAM" id="SSF50447">
    <property type="entry name" value="Translation proteins"/>
    <property type="match status" value="2"/>
</dbReference>
<dbReference type="PROSITE" id="PS51722">
    <property type="entry name" value="G_TR_2"/>
    <property type="match status" value="1"/>
</dbReference>
<dbReference type="PROSITE" id="PS01176">
    <property type="entry name" value="IF2"/>
    <property type="match status" value="1"/>
</dbReference>
<keyword id="KW-0007">Acetylation</keyword>
<keyword id="KW-0963">Cytoplasm</keyword>
<keyword id="KW-0342">GTP-binding</keyword>
<keyword id="KW-0396">Initiation factor</keyword>
<keyword id="KW-0547">Nucleotide-binding</keyword>
<keyword id="KW-0648">Protein biosynthesis</keyword>
<keyword id="KW-1185">Reference proteome</keyword>
<gene>
    <name evidence="2" type="primary">infB</name>
    <name type="ordered locus">SF3209</name>
    <name type="ordered locus">S3426</name>
</gene>
<reference key="1">
    <citation type="journal article" date="2002" name="Nucleic Acids Res.">
        <title>Genome sequence of Shigella flexneri 2a: insights into pathogenicity through comparison with genomes of Escherichia coli K12 and O157.</title>
        <authorList>
            <person name="Jin Q."/>
            <person name="Yuan Z."/>
            <person name="Xu J."/>
            <person name="Wang Y."/>
            <person name="Shen Y."/>
            <person name="Lu W."/>
            <person name="Wang J."/>
            <person name="Liu H."/>
            <person name="Yang J."/>
            <person name="Yang F."/>
            <person name="Zhang X."/>
            <person name="Zhang J."/>
            <person name="Yang G."/>
            <person name="Wu H."/>
            <person name="Qu D."/>
            <person name="Dong J."/>
            <person name="Sun L."/>
            <person name="Xue Y."/>
            <person name="Zhao A."/>
            <person name="Gao Y."/>
            <person name="Zhu J."/>
            <person name="Kan B."/>
            <person name="Ding K."/>
            <person name="Chen S."/>
            <person name="Cheng H."/>
            <person name="Yao Z."/>
            <person name="He B."/>
            <person name="Chen R."/>
            <person name="Ma D."/>
            <person name="Qiang B."/>
            <person name="Wen Y."/>
            <person name="Hou Y."/>
            <person name="Yu J."/>
        </authorList>
    </citation>
    <scope>NUCLEOTIDE SEQUENCE [LARGE SCALE GENOMIC DNA]</scope>
    <source>
        <strain>301 / Serotype 2a</strain>
    </source>
</reference>
<reference key="2">
    <citation type="journal article" date="2003" name="Infect. Immun.">
        <title>Complete genome sequence and comparative genomics of Shigella flexneri serotype 2a strain 2457T.</title>
        <authorList>
            <person name="Wei J."/>
            <person name="Goldberg M.B."/>
            <person name="Burland V."/>
            <person name="Venkatesan M.M."/>
            <person name="Deng W."/>
            <person name="Fournier G."/>
            <person name="Mayhew G.F."/>
            <person name="Plunkett G. III"/>
            <person name="Rose D.J."/>
            <person name="Darling A."/>
            <person name="Mau B."/>
            <person name="Perna N.T."/>
            <person name="Payne S.M."/>
            <person name="Runyen-Janecky L.J."/>
            <person name="Zhou S."/>
            <person name="Schwartz D.C."/>
            <person name="Blattner F.R."/>
        </authorList>
    </citation>
    <scope>NUCLEOTIDE SEQUENCE [LARGE SCALE GENOMIC DNA]</scope>
    <source>
        <strain>ATCC 700930 / 2457T / Serotype 2a</strain>
    </source>
</reference>
<evidence type="ECO:0000250" key="1"/>
<evidence type="ECO:0000255" key="2">
    <source>
        <dbReference type="HAMAP-Rule" id="MF_00100"/>
    </source>
</evidence>
<evidence type="ECO:0000256" key="3">
    <source>
        <dbReference type="SAM" id="MobiDB-lite"/>
    </source>
</evidence>